<dbReference type="EC" id="5.4.99.12" evidence="1"/>
<dbReference type="EMBL" id="CP000916">
    <property type="protein sequence ID" value="ACM23333.1"/>
    <property type="molecule type" value="Genomic_DNA"/>
</dbReference>
<dbReference type="RefSeq" id="WP_015919648.1">
    <property type="nucleotide sequence ID" value="NC_011978.1"/>
</dbReference>
<dbReference type="SMR" id="B9K8Q0"/>
<dbReference type="STRING" id="309803.CTN_1157"/>
<dbReference type="KEGG" id="tna:CTN_1157"/>
<dbReference type="eggNOG" id="COG0101">
    <property type="taxonomic scope" value="Bacteria"/>
</dbReference>
<dbReference type="HOGENOM" id="CLU_014673_0_1_0"/>
<dbReference type="Proteomes" id="UP000000445">
    <property type="component" value="Chromosome"/>
</dbReference>
<dbReference type="GO" id="GO:0003723">
    <property type="term" value="F:RNA binding"/>
    <property type="evidence" value="ECO:0007669"/>
    <property type="project" value="InterPro"/>
</dbReference>
<dbReference type="GO" id="GO:0160147">
    <property type="term" value="F:tRNA pseudouridine(38-40) synthase activity"/>
    <property type="evidence" value="ECO:0007669"/>
    <property type="project" value="UniProtKB-EC"/>
</dbReference>
<dbReference type="GO" id="GO:0031119">
    <property type="term" value="P:tRNA pseudouridine synthesis"/>
    <property type="evidence" value="ECO:0007669"/>
    <property type="project" value="UniProtKB-UniRule"/>
</dbReference>
<dbReference type="CDD" id="cd02570">
    <property type="entry name" value="PseudoU_synth_EcTruA"/>
    <property type="match status" value="1"/>
</dbReference>
<dbReference type="FunFam" id="3.30.70.580:FF:000001">
    <property type="entry name" value="tRNA pseudouridine synthase A"/>
    <property type="match status" value="1"/>
</dbReference>
<dbReference type="Gene3D" id="3.30.70.660">
    <property type="entry name" value="Pseudouridine synthase I, catalytic domain, C-terminal subdomain"/>
    <property type="match status" value="1"/>
</dbReference>
<dbReference type="Gene3D" id="3.30.70.580">
    <property type="entry name" value="Pseudouridine synthase I, catalytic domain, N-terminal subdomain"/>
    <property type="match status" value="1"/>
</dbReference>
<dbReference type="HAMAP" id="MF_00171">
    <property type="entry name" value="TruA"/>
    <property type="match status" value="1"/>
</dbReference>
<dbReference type="InterPro" id="IPR020103">
    <property type="entry name" value="PsdUridine_synth_cat_dom_sf"/>
</dbReference>
<dbReference type="InterPro" id="IPR001406">
    <property type="entry name" value="PsdUridine_synth_TruA"/>
</dbReference>
<dbReference type="InterPro" id="IPR020097">
    <property type="entry name" value="PsdUridine_synth_TruA_a/b_dom"/>
</dbReference>
<dbReference type="InterPro" id="IPR020095">
    <property type="entry name" value="PsdUridine_synth_TruA_C"/>
</dbReference>
<dbReference type="InterPro" id="IPR020094">
    <property type="entry name" value="TruA/RsuA/RluB/E/F_N"/>
</dbReference>
<dbReference type="NCBIfam" id="TIGR00071">
    <property type="entry name" value="hisT_truA"/>
    <property type="match status" value="1"/>
</dbReference>
<dbReference type="PANTHER" id="PTHR11142">
    <property type="entry name" value="PSEUDOURIDYLATE SYNTHASE"/>
    <property type="match status" value="1"/>
</dbReference>
<dbReference type="PANTHER" id="PTHR11142:SF0">
    <property type="entry name" value="TRNA PSEUDOURIDINE SYNTHASE-LIKE 1"/>
    <property type="match status" value="1"/>
</dbReference>
<dbReference type="Pfam" id="PF01416">
    <property type="entry name" value="PseudoU_synth_1"/>
    <property type="match status" value="2"/>
</dbReference>
<dbReference type="PIRSF" id="PIRSF001430">
    <property type="entry name" value="tRNA_psdUrid_synth"/>
    <property type="match status" value="1"/>
</dbReference>
<dbReference type="SUPFAM" id="SSF55120">
    <property type="entry name" value="Pseudouridine synthase"/>
    <property type="match status" value="1"/>
</dbReference>
<organism>
    <name type="scientific">Thermotoga neapolitana (strain ATCC 49049 / DSM 4359 / NBRC 107923 / NS-E)</name>
    <dbReference type="NCBI Taxonomy" id="309803"/>
    <lineage>
        <taxon>Bacteria</taxon>
        <taxon>Thermotogati</taxon>
        <taxon>Thermotogota</taxon>
        <taxon>Thermotogae</taxon>
        <taxon>Thermotogales</taxon>
        <taxon>Thermotogaceae</taxon>
        <taxon>Thermotoga</taxon>
    </lineage>
</organism>
<accession>B9K8Q0</accession>
<evidence type="ECO:0000255" key="1">
    <source>
        <dbReference type="HAMAP-Rule" id="MF_00171"/>
    </source>
</evidence>
<name>TRUA_THENN</name>
<comment type="function">
    <text evidence="1">Formation of pseudouridine at positions 38, 39 and 40 in the anticodon stem and loop of transfer RNAs.</text>
</comment>
<comment type="catalytic activity">
    <reaction evidence="1">
        <text>uridine(38/39/40) in tRNA = pseudouridine(38/39/40) in tRNA</text>
        <dbReference type="Rhea" id="RHEA:22376"/>
        <dbReference type="Rhea" id="RHEA-COMP:10085"/>
        <dbReference type="Rhea" id="RHEA-COMP:10087"/>
        <dbReference type="ChEBI" id="CHEBI:65314"/>
        <dbReference type="ChEBI" id="CHEBI:65315"/>
        <dbReference type="EC" id="5.4.99.12"/>
    </reaction>
</comment>
<comment type="subunit">
    <text evidence="1">Homodimer.</text>
</comment>
<comment type="similarity">
    <text evidence="1">Belongs to the tRNA pseudouridine synthase TruA family.</text>
</comment>
<proteinExistence type="inferred from homology"/>
<sequence>MRRVAAIVEYDGSNFFGYQGQPDVRTVQGVIEDALERIFKQRIYTQAAGRTDAGVHANGQLIAFNCPNDRMTTEDIKNAMNANLPDDVYVKKVFEVPKNFHPRFDVKKRIYHYFIHTSREKNVFLRKYAWWFPYELDLEAMRKAAKYLEGTHDFTSFKTGSDERDPVRTIYRIRILSLGKDMILIRVEGRSFLRRMVRNIVAALVKVGLRQWEPEKLKEVLEARDRSAAAGTAPAHGLYFYKVLF</sequence>
<keyword id="KW-0413">Isomerase</keyword>
<keyword id="KW-0819">tRNA processing</keyword>
<feature type="chain" id="PRO_1000194578" description="tRNA pseudouridine synthase A">
    <location>
        <begin position="1"/>
        <end position="245"/>
    </location>
</feature>
<feature type="active site" description="Nucleophile" evidence="1">
    <location>
        <position position="52"/>
    </location>
</feature>
<feature type="binding site" evidence="1">
    <location>
        <position position="111"/>
    </location>
    <ligand>
        <name>substrate</name>
    </ligand>
</feature>
<gene>
    <name evidence="1" type="primary">truA</name>
    <name type="ordered locus">CTN_1157</name>
</gene>
<protein>
    <recommendedName>
        <fullName evidence="1">tRNA pseudouridine synthase A</fullName>
        <ecNumber evidence="1">5.4.99.12</ecNumber>
    </recommendedName>
    <alternativeName>
        <fullName evidence="1">tRNA pseudouridine(38-40) synthase</fullName>
    </alternativeName>
    <alternativeName>
        <fullName evidence="1">tRNA pseudouridylate synthase I</fullName>
    </alternativeName>
    <alternativeName>
        <fullName evidence="1">tRNA-uridine isomerase I</fullName>
    </alternativeName>
</protein>
<reference key="1">
    <citation type="submission" date="2007-11" db="EMBL/GenBank/DDBJ databases">
        <title>The genome sequence of the hyperthermophilic bacterium Thermotoga neapolitana.</title>
        <authorList>
            <person name="Lim S.K."/>
            <person name="Kim J.S."/>
            <person name="Cha S.H."/>
            <person name="Park B.C."/>
            <person name="Lee D.S."/>
            <person name="Tae H.S."/>
            <person name="Kim S.-J."/>
            <person name="Kim J.J."/>
            <person name="Park K.J."/>
            <person name="Lee S.Y."/>
        </authorList>
    </citation>
    <scope>NUCLEOTIDE SEQUENCE [LARGE SCALE GENOMIC DNA]</scope>
    <source>
        <strain>ATCC 49049 / DSM 4359 / NBRC 107923 / NS-E</strain>
    </source>
</reference>